<dbReference type="EMBL" id="AB291586">
    <property type="protein sequence ID" value="BAF45921.1"/>
    <property type="molecule type" value="mRNA"/>
</dbReference>
<dbReference type="RefSeq" id="XP_043907532.1">
    <property type="nucleotide sequence ID" value="XM_044051597.1"/>
</dbReference>
<dbReference type="SMR" id="A2Q0U8"/>
<dbReference type="GeneID" id="122785694"/>
<dbReference type="GO" id="GO:0022627">
    <property type="term" value="C:cytosolic small ribosomal subunit"/>
    <property type="evidence" value="ECO:0007669"/>
    <property type="project" value="UniProtKB-UniRule"/>
</dbReference>
<dbReference type="GO" id="GO:0005634">
    <property type="term" value="C:nucleus"/>
    <property type="evidence" value="ECO:0007669"/>
    <property type="project" value="UniProtKB-SubCell"/>
</dbReference>
<dbReference type="GO" id="GO:0005886">
    <property type="term" value="C:plasma membrane"/>
    <property type="evidence" value="ECO:0007669"/>
    <property type="project" value="UniProtKB-SubCell"/>
</dbReference>
<dbReference type="GO" id="GO:0043236">
    <property type="term" value="F:laminin binding"/>
    <property type="evidence" value="ECO:0007669"/>
    <property type="project" value="UniProtKB-UniRule"/>
</dbReference>
<dbReference type="GO" id="GO:0005055">
    <property type="term" value="F:laminin receptor activity"/>
    <property type="evidence" value="ECO:0007669"/>
    <property type="project" value="UniProtKB-UniRule"/>
</dbReference>
<dbReference type="GO" id="GO:0003735">
    <property type="term" value="F:structural constituent of ribosome"/>
    <property type="evidence" value="ECO:0007669"/>
    <property type="project" value="UniProtKB-UniRule"/>
</dbReference>
<dbReference type="GO" id="GO:0000028">
    <property type="term" value="P:ribosomal small subunit assembly"/>
    <property type="evidence" value="ECO:0007669"/>
    <property type="project" value="UniProtKB-UniRule"/>
</dbReference>
<dbReference type="GO" id="GO:0006412">
    <property type="term" value="P:translation"/>
    <property type="evidence" value="ECO:0007669"/>
    <property type="project" value="UniProtKB-UniRule"/>
</dbReference>
<dbReference type="CDD" id="cd01425">
    <property type="entry name" value="RPS2"/>
    <property type="match status" value="1"/>
</dbReference>
<dbReference type="FunFam" id="3.40.50.10490:FF:000012">
    <property type="entry name" value="40S ribosomal protein SA"/>
    <property type="match status" value="1"/>
</dbReference>
<dbReference type="Gene3D" id="3.40.50.10490">
    <property type="entry name" value="Glucose-6-phosphate isomerase like protein, domain 1"/>
    <property type="match status" value="1"/>
</dbReference>
<dbReference type="HAMAP" id="MF_03015">
    <property type="entry name" value="Ribosomal_S2_euk"/>
    <property type="match status" value="1"/>
</dbReference>
<dbReference type="HAMAP" id="MF_03016">
    <property type="entry name" value="Ribosomal_S2_laminin_receptor"/>
    <property type="match status" value="1"/>
</dbReference>
<dbReference type="InterPro" id="IPR001865">
    <property type="entry name" value="Ribosomal_uS2"/>
</dbReference>
<dbReference type="InterPro" id="IPR032281">
    <property type="entry name" value="Ribosomal_uS2_C"/>
</dbReference>
<dbReference type="InterPro" id="IPR018130">
    <property type="entry name" value="Ribosomal_uS2_CS"/>
</dbReference>
<dbReference type="InterPro" id="IPR027498">
    <property type="entry name" value="Ribosomal_uS2_euk"/>
</dbReference>
<dbReference type="InterPro" id="IPR005707">
    <property type="entry name" value="Ribosomal_uS2_euk/arc"/>
</dbReference>
<dbReference type="InterPro" id="IPR023591">
    <property type="entry name" value="Ribosomal_uS2_flav_dom_sf"/>
</dbReference>
<dbReference type="InterPro" id="IPR027504">
    <property type="entry name" value="Ribosomal_uS2_vert"/>
</dbReference>
<dbReference type="NCBIfam" id="TIGR01012">
    <property type="entry name" value="uS2_euk_arch"/>
    <property type="match status" value="1"/>
</dbReference>
<dbReference type="PANTHER" id="PTHR11489">
    <property type="entry name" value="40S RIBOSOMAL PROTEIN SA"/>
    <property type="match status" value="1"/>
</dbReference>
<dbReference type="Pfam" id="PF16122">
    <property type="entry name" value="40S_SA_C"/>
    <property type="match status" value="1"/>
</dbReference>
<dbReference type="Pfam" id="PF00318">
    <property type="entry name" value="Ribosomal_S2"/>
    <property type="match status" value="2"/>
</dbReference>
<dbReference type="PRINTS" id="PR00395">
    <property type="entry name" value="RIBOSOMALS2"/>
</dbReference>
<dbReference type="SUPFAM" id="SSF52313">
    <property type="entry name" value="Ribosomal protein S2"/>
    <property type="match status" value="1"/>
</dbReference>
<dbReference type="PROSITE" id="PS00962">
    <property type="entry name" value="RIBOSOMAL_S2_1"/>
    <property type="match status" value="1"/>
</dbReference>
<dbReference type="PROSITE" id="PS00963">
    <property type="entry name" value="RIBOSOMAL_S2_2"/>
    <property type="match status" value="1"/>
</dbReference>
<proteinExistence type="evidence at transcript level"/>
<keyword id="KW-0007">Acetylation</keyword>
<keyword id="KW-1003">Cell membrane</keyword>
<keyword id="KW-0963">Cytoplasm</keyword>
<keyword id="KW-0472">Membrane</keyword>
<keyword id="KW-0539">Nucleus</keyword>
<keyword id="KW-0675">Receptor</keyword>
<keyword id="KW-0677">Repeat</keyword>
<keyword id="KW-0687">Ribonucleoprotein</keyword>
<keyword id="KW-0689">Ribosomal protein</keyword>
<accession>A2Q0U8</accession>
<comment type="function">
    <text evidence="1">Required for the assembly and/or stability of the 40S ribosomal subunit. Required for the processing of the 20S rRNA-precursor to mature 18S rRNA in a late step of the maturation of 40S ribosomal subunits. Also functions as a cell surface receptor for laminin. Plays a role in cell adhesion to the basement membrane and in the consequent activation of signaling transduction pathways. May play a role in cell fate determination and tissue morphogenesis.</text>
</comment>
<comment type="subunit">
    <text evidence="1">Monomer (37LRP) and homodimer (67LR). Component of the small ribosomal subunit. Mature ribosomes consist of a small (40S) and a large (60S) subunit. The 40S subunit contains about 33 different proteins and 1 molecule of RNA (18S). The 60S subunit contains about 49 different proteins and 3 molecules of RNA (28S, 5.8S and 5S). Interacts with rps21. Interacts with several laminins including at least lamb1. Interacts with mdk.</text>
</comment>
<comment type="subcellular location">
    <subcellularLocation>
        <location evidence="1">Cell membrane</location>
    </subcellularLocation>
    <subcellularLocation>
        <location evidence="1">Cytoplasm</location>
    </subcellularLocation>
    <subcellularLocation>
        <location evidence="1">Nucleus</location>
    </subcellularLocation>
    <text evidence="1">67LR is found at the surface of the plasma membrane, with its C-terminal laminin-binding domain accessible to extracellular ligands. 37LRP is found at the cell surface, in the cytoplasm and in the nucleus.</text>
</comment>
<comment type="PTM">
    <text evidence="1">Acylated. Acylation may be a prerequisite for conversion of the monomeric 37 kDa laminin receptor precursor (37LRP) to the mature dimeric 67 kDa laminin receptor (67LR), and may provide a mechanism for membrane association.</text>
</comment>
<comment type="PTM">
    <text evidence="1">Cleaved by stromelysin-3 (ST3) at the cell surface. Cleavage by stromelysin-3 may be a mechanism to alter cell-extracellular matrix interactions.</text>
</comment>
<comment type="miscellaneous">
    <text>This protein appears to have acquired a second function as a laminin receptor specifically in the vertebrate lineage.</text>
</comment>
<comment type="similarity">
    <text evidence="1">Belongs to the universal ribosomal protein uS2 family.</text>
</comment>
<evidence type="ECO:0000255" key="1">
    <source>
        <dbReference type="HAMAP-Rule" id="MF_03016"/>
    </source>
</evidence>
<evidence type="ECO:0000256" key="2">
    <source>
        <dbReference type="SAM" id="MobiDB-lite"/>
    </source>
</evidence>
<evidence type="ECO:0000305" key="3"/>
<feature type="initiator methionine" description="Removed" evidence="1">
    <location>
        <position position="1"/>
    </location>
</feature>
<feature type="chain" id="PRO_0000371571" description="Small ribosomal subunit protein uS2">
    <location>
        <begin position="2"/>
        <end position="313"/>
    </location>
</feature>
<feature type="repeat" description="[DE]-W-[ST] 1">
    <location>
        <begin position="230"/>
        <end position="232"/>
    </location>
</feature>
<feature type="repeat" description="[DE]-W-[ST] 2">
    <location>
        <begin position="245"/>
        <end position="247"/>
    </location>
</feature>
<feature type="repeat" description="[DE]-W-[ST] 3">
    <location>
        <begin position="284"/>
        <end position="286"/>
    </location>
</feature>
<feature type="repeat" description="[DE]-W-[ST] 4">
    <location>
        <begin position="293"/>
        <end position="295"/>
    </location>
</feature>
<feature type="repeat" description="[DE]-W-[ST] 5">
    <location>
        <begin position="311"/>
        <end position="313"/>
    </location>
</feature>
<feature type="region of interest" description="Laminin-binding" evidence="1">
    <location>
        <begin position="161"/>
        <end position="180"/>
    </location>
</feature>
<feature type="region of interest" description="Laminin-binding" evidence="1">
    <location>
        <begin position="205"/>
        <end position="229"/>
    </location>
</feature>
<feature type="region of interest" description="Laminin-binding" evidence="1">
    <location>
        <begin position="242"/>
        <end position="313"/>
    </location>
</feature>
<feature type="region of interest" description="Disordered" evidence="2">
    <location>
        <begin position="262"/>
        <end position="313"/>
    </location>
</feature>
<feature type="compositionally biased region" description="Low complexity" evidence="2">
    <location>
        <begin position="262"/>
        <end position="274"/>
    </location>
</feature>
<feature type="compositionally biased region" description="Polar residues" evidence="2">
    <location>
        <begin position="284"/>
        <end position="313"/>
    </location>
</feature>
<feature type="site" description="Cleavage; by ST3; site 1" evidence="1">
    <location>
        <begin position="115"/>
        <end position="116"/>
    </location>
</feature>
<feature type="site" description="Cleavage; by ST3; site 2" evidence="1">
    <location>
        <begin position="133"/>
        <end position="134"/>
    </location>
</feature>
<feature type="modified residue" description="N-acetylserine" evidence="1">
    <location>
        <position position="2"/>
    </location>
</feature>
<organism>
    <name type="scientific">Solea senegalensis</name>
    <name type="common">Senegalese sole</name>
    <dbReference type="NCBI Taxonomy" id="28829"/>
    <lineage>
        <taxon>Eukaryota</taxon>
        <taxon>Metazoa</taxon>
        <taxon>Chordata</taxon>
        <taxon>Craniata</taxon>
        <taxon>Vertebrata</taxon>
        <taxon>Euteleostomi</taxon>
        <taxon>Actinopterygii</taxon>
        <taxon>Neopterygii</taxon>
        <taxon>Teleostei</taxon>
        <taxon>Neoteleostei</taxon>
        <taxon>Acanthomorphata</taxon>
        <taxon>Carangaria</taxon>
        <taxon>Pleuronectiformes</taxon>
        <taxon>Pleuronectoidei</taxon>
        <taxon>Soleidae</taxon>
        <taxon>Solea</taxon>
    </lineage>
</organism>
<reference key="1">
    <citation type="journal article" date="2007" name="BMC Evol. Biol.">
        <title>Comparative sequence analysis of the complete set of 40S ribosomal proteins in the Senegalese sole (Solea senegalensis Kaup) and Atlantic halibut (Hippoglossus hippoglossus L.) (Teleostei: Pleuronectiformes): phylogeny and tissue- and development-specific expression.</title>
        <authorList>
            <person name="Manchado M."/>
            <person name="Infante C."/>
            <person name="Asensio E."/>
            <person name="Canavate J.P."/>
            <person name="Douglas S.E."/>
        </authorList>
    </citation>
    <scope>NUCLEOTIDE SEQUENCE [MRNA]</scope>
</reference>
<gene>
    <name type="primary">rpsa</name>
</gene>
<sequence length="313" mass="34466">MSGNLDVLQMKEEDVLKFLAAGTHLGGTNLDFQMDHYVYKRKSDGVYIINLKKTWEKLLLAARAIVAIENPADVCVISSRNTGQRAVLKFASATGATTFHGRFTPGTFTNQIQAAFREPRLLLVTDPRADHQPLTEASYVNIPTIALCNTDSPLRYVDIAIPCNNKGHHSVGLMWWMLAREVLRMRGTISREHPWDVMPDLYFYRDPEEIEKEEQAAAEKAVGKEEFQGEWSAPPAEFAQPEVADWSEGVAVPSVPIQQFAPATAAAAAAAAPPVKTGEVFSEDWSTQPATDDWSTAPTAQASDWGGTTSDWS</sequence>
<protein>
    <recommendedName>
        <fullName evidence="1">Small ribosomal subunit protein uS2</fullName>
    </recommendedName>
    <alternativeName>
        <fullName evidence="1">37 kDa laminin receptor precursor</fullName>
        <shortName evidence="1">37LRP</shortName>
    </alternativeName>
    <alternativeName>
        <fullName evidence="1">37/67 kDa laminin receptor</fullName>
        <shortName evidence="1">LRP/LR</shortName>
    </alternativeName>
    <alternativeName>
        <fullName evidence="3">40S ribosomal protein SA</fullName>
    </alternativeName>
    <alternativeName>
        <fullName evidence="1">67 kDa laminin receptor</fullName>
        <shortName evidence="1">67LR</shortName>
    </alternativeName>
    <alternativeName>
        <fullName evidence="1">Laminin receptor 1</fullName>
        <shortName evidence="1">LamR</shortName>
    </alternativeName>
    <alternativeName>
        <fullName evidence="1">Laminin-binding protein precursor p40</fullName>
        <shortName evidence="1">LBP/p40</shortName>
    </alternativeName>
</protein>
<name>RSSA_SOLSE</name>